<evidence type="ECO:0000255" key="1">
    <source>
        <dbReference type="HAMAP-Rule" id="MF_00050"/>
    </source>
</evidence>
<reference key="1">
    <citation type="journal article" date="2011" name="Stand. Genomic Sci.">
        <title>Complete genome sequence of the filamentous gliding predatory bacterium Herpetosiphon aurantiacus type strain (114-95(T)).</title>
        <authorList>
            <person name="Kiss H."/>
            <person name="Nett M."/>
            <person name="Domin N."/>
            <person name="Martin K."/>
            <person name="Maresca J.A."/>
            <person name="Copeland A."/>
            <person name="Lapidus A."/>
            <person name="Lucas S."/>
            <person name="Berry K.W."/>
            <person name="Glavina Del Rio T."/>
            <person name="Dalin E."/>
            <person name="Tice H."/>
            <person name="Pitluck S."/>
            <person name="Richardson P."/>
            <person name="Bruce D."/>
            <person name="Goodwin L."/>
            <person name="Han C."/>
            <person name="Detter J.C."/>
            <person name="Schmutz J."/>
            <person name="Brettin T."/>
            <person name="Land M."/>
            <person name="Hauser L."/>
            <person name="Kyrpides N.C."/>
            <person name="Ivanova N."/>
            <person name="Goeker M."/>
            <person name="Woyke T."/>
            <person name="Klenk H.P."/>
            <person name="Bryant D.A."/>
        </authorList>
    </citation>
    <scope>NUCLEOTIDE SEQUENCE [LARGE SCALE GENOMIC DNA]</scope>
    <source>
        <strain>ATCC 23779 / DSM 785 / 114-95</strain>
    </source>
</reference>
<sequence length="198" mass="21945">MSISMDQVKELRERTGAGILDCKKALTDTSGDVDAAIKILREKGLAAAAKKSSRDASDGRIEVYVHPGNKVVAIVEVNCETDFVAKTDDFKKLAYDLALHVAATNPSYVNREEVPAAEVEREREILRQQNVDSGKPANIVEKIVEGRIEKFYGEIVLLEQEFVKDPSVKIKDLVQEAIAKLGENIVVRRFSRFEVGSN</sequence>
<accession>A9B457</accession>
<gene>
    <name evidence="1" type="primary">tsf</name>
    <name type="ordered locus">Haur_4960</name>
</gene>
<comment type="function">
    <text evidence="1">Associates with the EF-Tu.GDP complex and induces the exchange of GDP to GTP. It remains bound to the aminoacyl-tRNA.EF-Tu.GTP complex up to the GTP hydrolysis stage on the ribosome.</text>
</comment>
<comment type="subcellular location">
    <subcellularLocation>
        <location evidence="1">Cytoplasm</location>
    </subcellularLocation>
</comment>
<comment type="similarity">
    <text evidence="1">Belongs to the EF-Ts family.</text>
</comment>
<proteinExistence type="inferred from homology"/>
<keyword id="KW-0963">Cytoplasm</keyword>
<keyword id="KW-0251">Elongation factor</keyword>
<keyword id="KW-0648">Protein biosynthesis</keyword>
<protein>
    <recommendedName>
        <fullName evidence="1">Elongation factor Ts</fullName>
        <shortName evidence="1">EF-Ts</shortName>
    </recommendedName>
</protein>
<organism>
    <name type="scientific">Herpetosiphon aurantiacus (strain ATCC 23779 / DSM 785 / 114-95)</name>
    <dbReference type="NCBI Taxonomy" id="316274"/>
    <lineage>
        <taxon>Bacteria</taxon>
        <taxon>Bacillati</taxon>
        <taxon>Chloroflexota</taxon>
        <taxon>Chloroflexia</taxon>
        <taxon>Herpetosiphonales</taxon>
        <taxon>Herpetosiphonaceae</taxon>
        <taxon>Herpetosiphon</taxon>
    </lineage>
</organism>
<dbReference type="EMBL" id="CP000875">
    <property type="protein sequence ID" value="ABX07590.1"/>
    <property type="molecule type" value="Genomic_DNA"/>
</dbReference>
<dbReference type="SMR" id="A9B457"/>
<dbReference type="FunCoup" id="A9B457">
    <property type="interactions" value="510"/>
</dbReference>
<dbReference type="STRING" id="316274.Haur_4960"/>
<dbReference type="KEGG" id="hau:Haur_4960"/>
<dbReference type="eggNOG" id="COG0264">
    <property type="taxonomic scope" value="Bacteria"/>
</dbReference>
<dbReference type="HOGENOM" id="CLU_047155_1_1_0"/>
<dbReference type="InParanoid" id="A9B457"/>
<dbReference type="Proteomes" id="UP000000787">
    <property type="component" value="Chromosome"/>
</dbReference>
<dbReference type="GO" id="GO:0005737">
    <property type="term" value="C:cytoplasm"/>
    <property type="evidence" value="ECO:0007669"/>
    <property type="project" value="UniProtKB-SubCell"/>
</dbReference>
<dbReference type="GO" id="GO:0003746">
    <property type="term" value="F:translation elongation factor activity"/>
    <property type="evidence" value="ECO:0007669"/>
    <property type="project" value="UniProtKB-UniRule"/>
</dbReference>
<dbReference type="CDD" id="cd14275">
    <property type="entry name" value="UBA_EF-Ts"/>
    <property type="match status" value="1"/>
</dbReference>
<dbReference type="FunFam" id="1.10.286.20:FF:000001">
    <property type="entry name" value="Elongation factor Ts"/>
    <property type="match status" value="1"/>
</dbReference>
<dbReference type="FunFam" id="1.10.8.10:FF:000001">
    <property type="entry name" value="Elongation factor Ts"/>
    <property type="match status" value="1"/>
</dbReference>
<dbReference type="Gene3D" id="1.10.286.20">
    <property type="match status" value="1"/>
</dbReference>
<dbReference type="Gene3D" id="1.10.8.10">
    <property type="entry name" value="DNA helicase RuvA subunit, C-terminal domain"/>
    <property type="match status" value="1"/>
</dbReference>
<dbReference type="Gene3D" id="3.30.479.20">
    <property type="entry name" value="Elongation factor Ts, dimerisation domain"/>
    <property type="match status" value="1"/>
</dbReference>
<dbReference type="HAMAP" id="MF_00050">
    <property type="entry name" value="EF_Ts"/>
    <property type="match status" value="1"/>
</dbReference>
<dbReference type="InterPro" id="IPR036402">
    <property type="entry name" value="EF-Ts_dimer_sf"/>
</dbReference>
<dbReference type="InterPro" id="IPR001816">
    <property type="entry name" value="Transl_elong_EFTs/EF1B"/>
</dbReference>
<dbReference type="InterPro" id="IPR014039">
    <property type="entry name" value="Transl_elong_EFTs/EF1B_dimer"/>
</dbReference>
<dbReference type="InterPro" id="IPR018101">
    <property type="entry name" value="Transl_elong_Ts_CS"/>
</dbReference>
<dbReference type="InterPro" id="IPR009060">
    <property type="entry name" value="UBA-like_sf"/>
</dbReference>
<dbReference type="NCBIfam" id="TIGR00116">
    <property type="entry name" value="tsf"/>
    <property type="match status" value="2"/>
</dbReference>
<dbReference type="PANTHER" id="PTHR11741">
    <property type="entry name" value="ELONGATION FACTOR TS"/>
    <property type="match status" value="1"/>
</dbReference>
<dbReference type="PANTHER" id="PTHR11741:SF0">
    <property type="entry name" value="ELONGATION FACTOR TS, MITOCHONDRIAL"/>
    <property type="match status" value="1"/>
</dbReference>
<dbReference type="Pfam" id="PF00889">
    <property type="entry name" value="EF_TS"/>
    <property type="match status" value="2"/>
</dbReference>
<dbReference type="SUPFAM" id="SSF54713">
    <property type="entry name" value="Elongation factor Ts (EF-Ts), dimerisation domain"/>
    <property type="match status" value="1"/>
</dbReference>
<dbReference type="SUPFAM" id="SSF46934">
    <property type="entry name" value="UBA-like"/>
    <property type="match status" value="1"/>
</dbReference>
<dbReference type="PROSITE" id="PS01126">
    <property type="entry name" value="EF_TS_1"/>
    <property type="match status" value="1"/>
</dbReference>
<dbReference type="PROSITE" id="PS01127">
    <property type="entry name" value="EF_TS_2"/>
    <property type="match status" value="1"/>
</dbReference>
<name>EFTS_HERA2</name>
<feature type="chain" id="PRO_1000116747" description="Elongation factor Ts">
    <location>
        <begin position="1"/>
        <end position="198"/>
    </location>
</feature>
<feature type="region of interest" description="Involved in Mg(2+) ion dislocation from EF-Tu" evidence="1">
    <location>
        <begin position="81"/>
        <end position="84"/>
    </location>
</feature>